<proteinExistence type="inferred from homology"/>
<sequence length="129" mass="15061">MSRKESRVQAFQTLFQLEMKDSDLTINEAISFIKDDNPDLDFEFIHWLVSGVKDHEPVLDETISPYLKDWTIARLLKTDRIILRMATYEILHSDTPAKVVMNEAVELTKQFSDDDHYKFINGVLSNIKK</sequence>
<protein>
    <recommendedName>
        <fullName evidence="1">Transcription antitermination protein NusB</fullName>
    </recommendedName>
    <alternativeName>
        <fullName evidence="1">Antitermination factor NusB</fullName>
    </alternativeName>
</protein>
<accession>A7X2Q3</accession>
<evidence type="ECO:0000255" key="1">
    <source>
        <dbReference type="HAMAP-Rule" id="MF_00073"/>
    </source>
</evidence>
<reference key="1">
    <citation type="journal article" date="2008" name="Antimicrob. Agents Chemother.">
        <title>Mutated response regulator graR is responsible for phenotypic conversion of Staphylococcus aureus from heterogeneous vancomycin-intermediate resistance to vancomycin-intermediate resistance.</title>
        <authorList>
            <person name="Neoh H.-M."/>
            <person name="Cui L."/>
            <person name="Yuzawa H."/>
            <person name="Takeuchi F."/>
            <person name="Matsuo M."/>
            <person name="Hiramatsu K."/>
        </authorList>
    </citation>
    <scope>NUCLEOTIDE SEQUENCE [LARGE SCALE GENOMIC DNA]</scope>
    <source>
        <strain>Mu3 / ATCC 700698</strain>
    </source>
</reference>
<organism>
    <name type="scientific">Staphylococcus aureus (strain Mu3 / ATCC 700698)</name>
    <dbReference type="NCBI Taxonomy" id="418127"/>
    <lineage>
        <taxon>Bacteria</taxon>
        <taxon>Bacillati</taxon>
        <taxon>Bacillota</taxon>
        <taxon>Bacilli</taxon>
        <taxon>Bacillales</taxon>
        <taxon>Staphylococcaceae</taxon>
        <taxon>Staphylococcus</taxon>
    </lineage>
</organism>
<feature type="chain" id="PRO_1000023778" description="Transcription antitermination protein NusB">
    <location>
        <begin position="1"/>
        <end position="129"/>
    </location>
</feature>
<keyword id="KW-0694">RNA-binding</keyword>
<keyword id="KW-0804">Transcription</keyword>
<keyword id="KW-0889">Transcription antitermination</keyword>
<keyword id="KW-0805">Transcription regulation</keyword>
<gene>
    <name evidence="1" type="primary">nusB</name>
    <name type="ordered locus">SAHV_1512</name>
</gene>
<dbReference type="EMBL" id="AP009324">
    <property type="protein sequence ID" value="BAF78395.1"/>
    <property type="molecule type" value="Genomic_DNA"/>
</dbReference>
<dbReference type="RefSeq" id="WP_000087385.1">
    <property type="nucleotide sequence ID" value="NZ_CTYB01000003.1"/>
</dbReference>
<dbReference type="SMR" id="A7X2Q3"/>
<dbReference type="KEGG" id="saw:SAHV_1512"/>
<dbReference type="HOGENOM" id="CLU_087843_3_3_9"/>
<dbReference type="GO" id="GO:0005829">
    <property type="term" value="C:cytosol"/>
    <property type="evidence" value="ECO:0007669"/>
    <property type="project" value="TreeGrafter"/>
</dbReference>
<dbReference type="GO" id="GO:0003723">
    <property type="term" value="F:RNA binding"/>
    <property type="evidence" value="ECO:0007669"/>
    <property type="project" value="UniProtKB-UniRule"/>
</dbReference>
<dbReference type="GO" id="GO:0006353">
    <property type="term" value="P:DNA-templated transcription termination"/>
    <property type="evidence" value="ECO:0007669"/>
    <property type="project" value="UniProtKB-UniRule"/>
</dbReference>
<dbReference type="GO" id="GO:0031564">
    <property type="term" value="P:transcription antitermination"/>
    <property type="evidence" value="ECO:0007669"/>
    <property type="project" value="UniProtKB-KW"/>
</dbReference>
<dbReference type="FunFam" id="1.10.940.10:FF:000011">
    <property type="entry name" value="Transcription antitermination protein NusB"/>
    <property type="match status" value="1"/>
</dbReference>
<dbReference type="Gene3D" id="1.10.940.10">
    <property type="entry name" value="NusB-like"/>
    <property type="match status" value="1"/>
</dbReference>
<dbReference type="HAMAP" id="MF_00073">
    <property type="entry name" value="NusB"/>
    <property type="match status" value="1"/>
</dbReference>
<dbReference type="InterPro" id="IPR035926">
    <property type="entry name" value="NusB-like_sf"/>
</dbReference>
<dbReference type="InterPro" id="IPR011605">
    <property type="entry name" value="NusB_fam"/>
</dbReference>
<dbReference type="InterPro" id="IPR006027">
    <property type="entry name" value="NusB_RsmB_TIM44"/>
</dbReference>
<dbReference type="NCBIfam" id="TIGR01951">
    <property type="entry name" value="nusB"/>
    <property type="match status" value="1"/>
</dbReference>
<dbReference type="PANTHER" id="PTHR11078:SF3">
    <property type="entry name" value="ANTITERMINATION NUSB DOMAIN-CONTAINING PROTEIN"/>
    <property type="match status" value="1"/>
</dbReference>
<dbReference type="PANTHER" id="PTHR11078">
    <property type="entry name" value="N UTILIZATION SUBSTANCE PROTEIN B-RELATED"/>
    <property type="match status" value="1"/>
</dbReference>
<dbReference type="Pfam" id="PF01029">
    <property type="entry name" value="NusB"/>
    <property type="match status" value="1"/>
</dbReference>
<dbReference type="SUPFAM" id="SSF48013">
    <property type="entry name" value="NusB-like"/>
    <property type="match status" value="1"/>
</dbReference>
<name>NUSB_STAA1</name>
<comment type="function">
    <text evidence="1">Involved in transcription antitermination. Required for transcription of ribosomal RNA (rRNA) genes. Binds specifically to the boxA antiterminator sequence of the ribosomal RNA (rrn) operons.</text>
</comment>
<comment type="similarity">
    <text evidence="1">Belongs to the NusB family.</text>
</comment>